<reference key="1">
    <citation type="submission" date="2006-12" db="EMBL/GenBank/DDBJ databases">
        <title>Complete sequence of Chlorobium phaeobacteroides DSM 266.</title>
        <authorList>
            <consortium name="US DOE Joint Genome Institute"/>
            <person name="Copeland A."/>
            <person name="Lucas S."/>
            <person name="Lapidus A."/>
            <person name="Barry K."/>
            <person name="Detter J.C."/>
            <person name="Glavina del Rio T."/>
            <person name="Hammon N."/>
            <person name="Israni S."/>
            <person name="Pitluck S."/>
            <person name="Goltsman E."/>
            <person name="Schmutz J."/>
            <person name="Larimer F."/>
            <person name="Land M."/>
            <person name="Hauser L."/>
            <person name="Mikhailova N."/>
            <person name="Li T."/>
            <person name="Overmann J."/>
            <person name="Bryant D.A."/>
            <person name="Richardson P."/>
        </authorList>
    </citation>
    <scope>NUCLEOTIDE SEQUENCE [LARGE SCALE GENOMIC DNA]</scope>
    <source>
        <strain>DSM 266 / SMG 266 / 2430</strain>
    </source>
</reference>
<keyword id="KW-0067">ATP-binding</keyword>
<keyword id="KW-0963">Cytoplasm</keyword>
<keyword id="KW-1015">Disulfide bond</keyword>
<keyword id="KW-0547">Nucleotide-binding</keyword>
<keyword id="KW-1185">Reference proteome</keyword>
<keyword id="KW-0694">RNA-binding</keyword>
<keyword id="KW-0808">Transferase</keyword>
<keyword id="KW-0819">tRNA processing</keyword>
<keyword id="KW-0820">tRNA-binding</keyword>
<dbReference type="EC" id="2.8.1.13" evidence="1"/>
<dbReference type="EMBL" id="CP000492">
    <property type="protein sequence ID" value="ABL66112.1"/>
    <property type="molecule type" value="Genomic_DNA"/>
</dbReference>
<dbReference type="RefSeq" id="WP_011745914.1">
    <property type="nucleotide sequence ID" value="NC_008639.1"/>
</dbReference>
<dbReference type="SMR" id="A1BI85"/>
<dbReference type="STRING" id="290317.Cpha266_2100"/>
<dbReference type="KEGG" id="cph:Cpha266_2100"/>
<dbReference type="eggNOG" id="COG0482">
    <property type="taxonomic scope" value="Bacteria"/>
</dbReference>
<dbReference type="HOGENOM" id="CLU_035188_1_0_10"/>
<dbReference type="OrthoDB" id="9800696at2"/>
<dbReference type="Proteomes" id="UP000008701">
    <property type="component" value="Chromosome"/>
</dbReference>
<dbReference type="GO" id="GO:0005737">
    <property type="term" value="C:cytoplasm"/>
    <property type="evidence" value="ECO:0007669"/>
    <property type="project" value="UniProtKB-SubCell"/>
</dbReference>
<dbReference type="GO" id="GO:0005524">
    <property type="term" value="F:ATP binding"/>
    <property type="evidence" value="ECO:0007669"/>
    <property type="project" value="UniProtKB-KW"/>
</dbReference>
<dbReference type="GO" id="GO:0000049">
    <property type="term" value="F:tRNA binding"/>
    <property type="evidence" value="ECO:0007669"/>
    <property type="project" value="UniProtKB-KW"/>
</dbReference>
<dbReference type="GO" id="GO:0103016">
    <property type="term" value="F:tRNA-uridine 2-sulfurtransferase activity"/>
    <property type="evidence" value="ECO:0007669"/>
    <property type="project" value="UniProtKB-EC"/>
</dbReference>
<dbReference type="GO" id="GO:0002143">
    <property type="term" value="P:tRNA wobble position uridine thiolation"/>
    <property type="evidence" value="ECO:0007669"/>
    <property type="project" value="TreeGrafter"/>
</dbReference>
<dbReference type="CDD" id="cd01998">
    <property type="entry name" value="MnmA_TRMU-like"/>
    <property type="match status" value="1"/>
</dbReference>
<dbReference type="Gene3D" id="2.30.30.280">
    <property type="entry name" value="Adenine nucleotide alpha hydrolases-like domains"/>
    <property type="match status" value="1"/>
</dbReference>
<dbReference type="Gene3D" id="3.40.50.620">
    <property type="entry name" value="HUPs"/>
    <property type="match status" value="1"/>
</dbReference>
<dbReference type="Gene3D" id="2.40.30.10">
    <property type="entry name" value="Translation factors"/>
    <property type="match status" value="1"/>
</dbReference>
<dbReference type="HAMAP" id="MF_00144">
    <property type="entry name" value="tRNA_thiouridyl_MnmA"/>
    <property type="match status" value="1"/>
</dbReference>
<dbReference type="InterPro" id="IPR004506">
    <property type="entry name" value="MnmA-like"/>
</dbReference>
<dbReference type="InterPro" id="IPR046885">
    <property type="entry name" value="MnmA-like_C"/>
</dbReference>
<dbReference type="InterPro" id="IPR046884">
    <property type="entry name" value="MnmA-like_central"/>
</dbReference>
<dbReference type="InterPro" id="IPR023382">
    <property type="entry name" value="MnmA-like_central_sf"/>
</dbReference>
<dbReference type="InterPro" id="IPR014729">
    <property type="entry name" value="Rossmann-like_a/b/a_fold"/>
</dbReference>
<dbReference type="NCBIfam" id="NF001138">
    <property type="entry name" value="PRK00143.1"/>
    <property type="match status" value="1"/>
</dbReference>
<dbReference type="NCBIfam" id="TIGR00420">
    <property type="entry name" value="trmU"/>
    <property type="match status" value="1"/>
</dbReference>
<dbReference type="PANTHER" id="PTHR11933:SF5">
    <property type="entry name" value="MITOCHONDRIAL TRNA-SPECIFIC 2-THIOURIDYLASE 1"/>
    <property type="match status" value="1"/>
</dbReference>
<dbReference type="PANTHER" id="PTHR11933">
    <property type="entry name" value="TRNA 5-METHYLAMINOMETHYL-2-THIOURIDYLATE -METHYLTRANSFERASE"/>
    <property type="match status" value="1"/>
</dbReference>
<dbReference type="Pfam" id="PF03054">
    <property type="entry name" value="tRNA_Me_trans"/>
    <property type="match status" value="1"/>
</dbReference>
<dbReference type="Pfam" id="PF20258">
    <property type="entry name" value="tRNA_Me_trans_C"/>
    <property type="match status" value="1"/>
</dbReference>
<dbReference type="Pfam" id="PF20259">
    <property type="entry name" value="tRNA_Me_trans_M"/>
    <property type="match status" value="1"/>
</dbReference>
<dbReference type="SUPFAM" id="SSF52402">
    <property type="entry name" value="Adenine nucleotide alpha hydrolases-like"/>
    <property type="match status" value="1"/>
</dbReference>
<evidence type="ECO:0000255" key="1">
    <source>
        <dbReference type="HAMAP-Rule" id="MF_00144"/>
    </source>
</evidence>
<protein>
    <recommendedName>
        <fullName evidence="1">tRNA-specific 2-thiouridylase MnmA</fullName>
        <ecNumber evidence="1">2.8.1.13</ecNumber>
    </recommendedName>
</protein>
<feature type="chain" id="PRO_0000349577" description="tRNA-specific 2-thiouridylase MnmA">
    <location>
        <begin position="1"/>
        <end position="357"/>
    </location>
</feature>
<feature type="region of interest" description="Interaction with tRNA" evidence="1">
    <location>
        <begin position="142"/>
        <end position="144"/>
    </location>
</feature>
<feature type="region of interest" description="Interaction with tRNA" evidence="1">
    <location>
        <begin position="301"/>
        <end position="302"/>
    </location>
</feature>
<feature type="active site" description="Nucleophile" evidence="1">
    <location>
        <position position="96"/>
    </location>
</feature>
<feature type="active site" description="Cysteine persulfide intermediate" evidence="1">
    <location>
        <position position="192"/>
    </location>
</feature>
<feature type="binding site" evidence="1">
    <location>
        <begin position="8"/>
        <end position="15"/>
    </location>
    <ligand>
        <name>ATP</name>
        <dbReference type="ChEBI" id="CHEBI:30616"/>
    </ligand>
</feature>
<feature type="binding site" evidence="1">
    <location>
        <position position="34"/>
    </location>
    <ligand>
        <name>ATP</name>
        <dbReference type="ChEBI" id="CHEBI:30616"/>
    </ligand>
</feature>
<feature type="binding site" evidence="1">
    <location>
        <position position="120"/>
    </location>
    <ligand>
        <name>ATP</name>
        <dbReference type="ChEBI" id="CHEBI:30616"/>
    </ligand>
</feature>
<feature type="site" description="Interaction with tRNA" evidence="1">
    <location>
        <position position="121"/>
    </location>
</feature>
<feature type="site" description="Interaction with tRNA" evidence="1">
    <location>
        <position position="334"/>
    </location>
</feature>
<feature type="disulfide bond" description="Alternate" evidence="1">
    <location>
        <begin position="96"/>
        <end position="192"/>
    </location>
</feature>
<comment type="function">
    <text evidence="1">Catalyzes the 2-thiolation of uridine at the wobble position (U34) of tRNA, leading to the formation of s(2)U34.</text>
</comment>
<comment type="catalytic activity">
    <reaction evidence="1">
        <text>S-sulfanyl-L-cysteinyl-[protein] + uridine(34) in tRNA + AH2 + ATP = 2-thiouridine(34) in tRNA + L-cysteinyl-[protein] + A + AMP + diphosphate + H(+)</text>
        <dbReference type="Rhea" id="RHEA:47032"/>
        <dbReference type="Rhea" id="RHEA-COMP:10131"/>
        <dbReference type="Rhea" id="RHEA-COMP:11726"/>
        <dbReference type="Rhea" id="RHEA-COMP:11727"/>
        <dbReference type="Rhea" id="RHEA-COMP:11728"/>
        <dbReference type="ChEBI" id="CHEBI:13193"/>
        <dbReference type="ChEBI" id="CHEBI:15378"/>
        <dbReference type="ChEBI" id="CHEBI:17499"/>
        <dbReference type="ChEBI" id="CHEBI:29950"/>
        <dbReference type="ChEBI" id="CHEBI:30616"/>
        <dbReference type="ChEBI" id="CHEBI:33019"/>
        <dbReference type="ChEBI" id="CHEBI:61963"/>
        <dbReference type="ChEBI" id="CHEBI:65315"/>
        <dbReference type="ChEBI" id="CHEBI:87170"/>
        <dbReference type="ChEBI" id="CHEBI:456215"/>
        <dbReference type="EC" id="2.8.1.13"/>
    </reaction>
</comment>
<comment type="subcellular location">
    <subcellularLocation>
        <location evidence="1">Cytoplasm</location>
    </subcellularLocation>
</comment>
<comment type="similarity">
    <text evidence="1">Belongs to the MnmA/TRMU family.</text>
</comment>
<organism>
    <name type="scientific">Chlorobium phaeobacteroides (strain DSM 266 / SMG 266 / 2430)</name>
    <dbReference type="NCBI Taxonomy" id="290317"/>
    <lineage>
        <taxon>Bacteria</taxon>
        <taxon>Pseudomonadati</taxon>
        <taxon>Chlorobiota</taxon>
        <taxon>Chlorobiia</taxon>
        <taxon>Chlorobiales</taxon>
        <taxon>Chlorobiaceae</taxon>
        <taxon>Chlorobium/Pelodictyon group</taxon>
        <taxon>Chlorobium</taxon>
    </lineage>
</organism>
<gene>
    <name evidence="1" type="primary">mnmA</name>
    <name type="ordered locus">Cpha266_2100</name>
</gene>
<accession>A1BI85</accession>
<name>MNMA_CHLPD</name>
<sequence>MTETVVVGISGGVDSAVAACLLMKQGYRVLGLNIRILDTPDEHPSLAPSPLLISDHADYQFPVFSLNLSARFSQEVIRYFQADYLAGKTPNPCMVCNKKIKWHGLLEGARLLGAERIATGHYARTASLDGRVRLYKGLDPQKDQSYFLWMLSQNDLNKTCFPLGELAKEKVRELARTFGVRAAEKKESQEICFVPHDDYCRYLELAVPGLKEKVAGGDIVDENGKVLGKHRGYPFYTIGQRRGLGLSSTEPLYVTALDQENNCVHTGNKSSLDTRSLTVSGLNWINNKSLDEPVEAFGKIRYRDRETPCTIAPLPDGQATITFHTAKHAVAPGQAAVFYHDEEVLGGGFISAVNRDR</sequence>
<proteinExistence type="inferred from homology"/>